<accession>Q5R106</accession>
<sequence length="229" mass="25093">MSLPKPPLTELEKIVGYSFEQQGLLHQAMTHRSASSTHNERLEFLGDSILGLVIAEALYQKFPKVAEGDLSRMRAAIVCGRSLAKLGKKMGLGDFLSLGQGELKSGGYRRESILADAVEAIIGAIYLDSDMDTIRQVILNWFEPQLTLIEPGTSQKDPKTRLQELLQARQKPLPEYDVVATQGQAHNQQFTVNCSVEGIESPFKGTGTSRRKAEQAAATAALEHLQESA</sequence>
<protein>
    <recommendedName>
        <fullName evidence="1">Ribonuclease 3</fullName>
        <ecNumber evidence="1">3.1.26.3</ecNumber>
    </recommendedName>
    <alternativeName>
        <fullName evidence="1">Ribonuclease III</fullName>
        <shortName evidence="1">RNase III</shortName>
    </alternativeName>
</protein>
<name>RNC_IDILO</name>
<reference key="1">
    <citation type="journal article" date="2004" name="Proc. Natl. Acad. Sci. U.S.A.">
        <title>Genome sequence of the deep-sea gamma-proteobacterium Idiomarina loihiensis reveals amino acid fermentation as a source of carbon and energy.</title>
        <authorList>
            <person name="Hou S."/>
            <person name="Saw J.H."/>
            <person name="Lee K.S."/>
            <person name="Freitas T.A."/>
            <person name="Belisle C."/>
            <person name="Kawarabayasi Y."/>
            <person name="Donachie S.P."/>
            <person name="Pikina A."/>
            <person name="Galperin M.Y."/>
            <person name="Koonin E.V."/>
            <person name="Makarova K.S."/>
            <person name="Omelchenko M.V."/>
            <person name="Sorokin A."/>
            <person name="Wolf Y.I."/>
            <person name="Li Q.X."/>
            <person name="Keum Y.S."/>
            <person name="Campbell S."/>
            <person name="Denery J."/>
            <person name="Aizawa S."/>
            <person name="Shibata S."/>
            <person name="Malahoff A."/>
            <person name="Alam M."/>
        </authorList>
    </citation>
    <scope>NUCLEOTIDE SEQUENCE [LARGE SCALE GENOMIC DNA]</scope>
    <source>
        <strain>ATCC BAA-735 / DSM 15497 / L2-TR</strain>
    </source>
</reference>
<comment type="function">
    <text evidence="1">Digests double-stranded RNA. Involved in the processing of primary rRNA transcript to yield the immediate precursors to the large and small rRNAs (23S and 16S). Processes some mRNAs, and tRNAs when they are encoded in the rRNA operon. Processes pre-crRNA and tracrRNA of type II CRISPR loci if present in the organism.</text>
</comment>
<comment type="catalytic activity">
    <reaction evidence="1">
        <text>Endonucleolytic cleavage to 5'-phosphomonoester.</text>
        <dbReference type="EC" id="3.1.26.3"/>
    </reaction>
</comment>
<comment type="cofactor">
    <cofactor evidence="1">
        <name>Mg(2+)</name>
        <dbReference type="ChEBI" id="CHEBI:18420"/>
    </cofactor>
</comment>
<comment type="subunit">
    <text evidence="1">Homodimer.</text>
</comment>
<comment type="subcellular location">
    <subcellularLocation>
        <location evidence="1">Cytoplasm</location>
    </subcellularLocation>
</comment>
<comment type="similarity">
    <text evidence="1">Belongs to the ribonuclease III family.</text>
</comment>
<evidence type="ECO:0000255" key="1">
    <source>
        <dbReference type="HAMAP-Rule" id="MF_00104"/>
    </source>
</evidence>
<evidence type="ECO:0000256" key="2">
    <source>
        <dbReference type="SAM" id="MobiDB-lite"/>
    </source>
</evidence>
<dbReference type="EC" id="3.1.26.3" evidence="1"/>
<dbReference type="EMBL" id="AE017340">
    <property type="protein sequence ID" value="AAV81650.1"/>
    <property type="molecule type" value="Genomic_DNA"/>
</dbReference>
<dbReference type="RefSeq" id="WP_011234061.1">
    <property type="nucleotide sequence ID" value="NC_006512.1"/>
</dbReference>
<dbReference type="SMR" id="Q5R106"/>
<dbReference type="STRING" id="283942.IL0810"/>
<dbReference type="GeneID" id="41335965"/>
<dbReference type="KEGG" id="ilo:IL0810"/>
<dbReference type="eggNOG" id="COG0571">
    <property type="taxonomic scope" value="Bacteria"/>
</dbReference>
<dbReference type="HOGENOM" id="CLU_000907_1_1_6"/>
<dbReference type="OrthoDB" id="9805026at2"/>
<dbReference type="Proteomes" id="UP000001171">
    <property type="component" value="Chromosome"/>
</dbReference>
<dbReference type="GO" id="GO:0005737">
    <property type="term" value="C:cytoplasm"/>
    <property type="evidence" value="ECO:0007669"/>
    <property type="project" value="UniProtKB-SubCell"/>
</dbReference>
<dbReference type="GO" id="GO:0003725">
    <property type="term" value="F:double-stranded RNA binding"/>
    <property type="evidence" value="ECO:0007669"/>
    <property type="project" value="TreeGrafter"/>
</dbReference>
<dbReference type="GO" id="GO:0046872">
    <property type="term" value="F:metal ion binding"/>
    <property type="evidence" value="ECO:0007669"/>
    <property type="project" value="UniProtKB-KW"/>
</dbReference>
<dbReference type="GO" id="GO:0004525">
    <property type="term" value="F:ribonuclease III activity"/>
    <property type="evidence" value="ECO:0007669"/>
    <property type="project" value="UniProtKB-UniRule"/>
</dbReference>
<dbReference type="GO" id="GO:0019843">
    <property type="term" value="F:rRNA binding"/>
    <property type="evidence" value="ECO:0007669"/>
    <property type="project" value="UniProtKB-KW"/>
</dbReference>
<dbReference type="GO" id="GO:0006397">
    <property type="term" value="P:mRNA processing"/>
    <property type="evidence" value="ECO:0007669"/>
    <property type="project" value="UniProtKB-UniRule"/>
</dbReference>
<dbReference type="GO" id="GO:0010468">
    <property type="term" value="P:regulation of gene expression"/>
    <property type="evidence" value="ECO:0007669"/>
    <property type="project" value="TreeGrafter"/>
</dbReference>
<dbReference type="GO" id="GO:0006364">
    <property type="term" value="P:rRNA processing"/>
    <property type="evidence" value="ECO:0007669"/>
    <property type="project" value="UniProtKB-UniRule"/>
</dbReference>
<dbReference type="GO" id="GO:0008033">
    <property type="term" value="P:tRNA processing"/>
    <property type="evidence" value="ECO:0007669"/>
    <property type="project" value="UniProtKB-KW"/>
</dbReference>
<dbReference type="CDD" id="cd10845">
    <property type="entry name" value="DSRM_RNAse_III_family"/>
    <property type="match status" value="1"/>
</dbReference>
<dbReference type="CDD" id="cd00593">
    <property type="entry name" value="RIBOc"/>
    <property type="match status" value="1"/>
</dbReference>
<dbReference type="FunFam" id="1.10.1520.10:FF:000001">
    <property type="entry name" value="Ribonuclease 3"/>
    <property type="match status" value="1"/>
</dbReference>
<dbReference type="FunFam" id="3.30.160.20:FF:000003">
    <property type="entry name" value="Ribonuclease 3"/>
    <property type="match status" value="1"/>
</dbReference>
<dbReference type="Gene3D" id="3.30.160.20">
    <property type="match status" value="1"/>
</dbReference>
<dbReference type="Gene3D" id="1.10.1520.10">
    <property type="entry name" value="Ribonuclease III domain"/>
    <property type="match status" value="1"/>
</dbReference>
<dbReference type="HAMAP" id="MF_00104">
    <property type="entry name" value="RNase_III"/>
    <property type="match status" value="1"/>
</dbReference>
<dbReference type="InterPro" id="IPR014720">
    <property type="entry name" value="dsRBD_dom"/>
</dbReference>
<dbReference type="InterPro" id="IPR011907">
    <property type="entry name" value="RNase_III"/>
</dbReference>
<dbReference type="InterPro" id="IPR000999">
    <property type="entry name" value="RNase_III_dom"/>
</dbReference>
<dbReference type="InterPro" id="IPR036389">
    <property type="entry name" value="RNase_III_sf"/>
</dbReference>
<dbReference type="NCBIfam" id="TIGR02191">
    <property type="entry name" value="RNaseIII"/>
    <property type="match status" value="1"/>
</dbReference>
<dbReference type="PANTHER" id="PTHR11207:SF0">
    <property type="entry name" value="RIBONUCLEASE 3"/>
    <property type="match status" value="1"/>
</dbReference>
<dbReference type="PANTHER" id="PTHR11207">
    <property type="entry name" value="RIBONUCLEASE III"/>
    <property type="match status" value="1"/>
</dbReference>
<dbReference type="Pfam" id="PF00035">
    <property type="entry name" value="dsrm"/>
    <property type="match status" value="1"/>
</dbReference>
<dbReference type="Pfam" id="PF14622">
    <property type="entry name" value="Ribonucleas_3_3"/>
    <property type="match status" value="1"/>
</dbReference>
<dbReference type="SMART" id="SM00358">
    <property type="entry name" value="DSRM"/>
    <property type="match status" value="1"/>
</dbReference>
<dbReference type="SMART" id="SM00535">
    <property type="entry name" value="RIBOc"/>
    <property type="match status" value="1"/>
</dbReference>
<dbReference type="SUPFAM" id="SSF54768">
    <property type="entry name" value="dsRNA-binding domain-like"/>
    <property type="match status" value="1"/>
</dbReference>
<dbReference type="SUPFAM" id="SSF69065">
    <property type="entry name" value="RNase III domain-like"/>
    <property type="match status" value="1"/>
</dbReference>
<dbReference type="PROSITE" id="PS50137">
    <property type="entry name" value="DS_RBD"/>
    <property type="match status" value="1"/>
</dbReference>
<dbReference type="PROSITE" id="PS00517">
    <property type="entry name" value="RNASE_3_1"/>
    <property type="match status" value="1"/>
</dbReference>
<dbReference type="PROSITE" id="PS50142">
    <property type="entry name" value="RNASE_3_2"/>
    <property type="match status" value="1"/>
</dbReference>
<proteinExistence type="inferred from homology"/>
<keyword id="KW-0963">Cytoplasm</keyword>
<keyword id="KW-0255">Endonuclease</keyword>
<keyword id="KW-0378">Hydrolase</keyword>
<keyword id="KW-0460">Magnesium</keyword>
<keyword id="KW-0479">Metal-binding</keyword>
<keyword id="KW-0507">mRNA processing</keyword>
<keyword id="KW-0540">Nuclease</keyword>
<keyword id="KW-1185">Reference proteome</keyword>
<keyword id="KW-0694">RNA-binding</keyword>
<keyword id="KW-0698">rRNA processing</keyword>
<keyword id="KW-0699">rRNA-binding</keyword>
<keyword id="KW-0819">tRNA processing</keyword>
<gene>
    <name evidence="1" type="primary">rnc</name>
    <name type="ordered locus">IL0810</name>
</gene>
<feature type="chain" id="PRO_0000228538" description="Ribonuclease 3">
    <location>
        <begin position="1"/>
        <end position="229"/>
    </location>
</feature>
<feature type="domain" description="RNase III" evidence="1">
    <location>
        <begin position="8"/>
        <end position="130"/>
    </location>
</feature>
<feature type="domain" description="DRBM" evidence="1">
    <location>
        <begin position="157"/>
        <end position="227"/>
    </location>
</feature>
<feature type="region of interest" description="Disordered" evidence="2">
    <location>
        <begin position="201"/>
        <end position="229"/>
    </location>
</feature>
<feature type="active site" evidence="1">
    <location>
        <position position="47"/>
    </location>
</feature>
<feature type="active site" evidence="1">
    <location>
        <position position="119"/>
    </location>
</feature>
<feature type="binding site" evidence="1">
    <location>
        <position position="43"/>
    </location>
    <ligand>
        <name>Mg(2+)</name>
        <dbReference type="ChEBI" id="CHEBI:18420"/>
    </ligand>
</feature>
<feature type="binding site" evidence="1">
    <location>
        <position position="116"/>
    </location>
    <ligand>
        <name>Mg(2+)</name>
        <dbReference type="ChEBI" id="CHEBI:18420"/>
    </ligand>
</feature>
<feature type="binding site" evidence="1">
    <location>
        <position position="119"/>
    </location>
    <ligand>
        <name>Mg(2+)</name>
        <dbReference type="ChEBI" id="CHEBI:18420"/>
    </ligand>
</feature>
<organism>
    <name type="scientific">Idiomarina loihiensis (strain ATCC BAA-735 / DSM 15497 / L2-TR)</name>
    <dbReference type="NCBI Taxonomy" id="283942"/>
    <lineage>
        <taxon>Bacteria</taxon>
        <taxon>Pseudomonadati</taxon>
        <taxon>Pseudomonadota</taxon>
        <taxon>Gammaproteobacteria</taxon>
        <taxon>Alteromonadales</taxon>
        <taxon>Idiomarinaceae</taxon>
        <taxon>Idiomarina</taxon>
    </lineage>
</organism>